<comment type="function">
    <text evidence="2">Has both toxic and EGF activity. Its EGF activity consists of rounding cells (morphological change) and inducing tyrosine phosphorylation of the EGFR in A431 cells, but with a lower potency that human EGF.</text>
</comment>
<comment type="subcellular location">
    <subcellularLocation>
        <location evidence="1">Secreted</location>
    </subcellularLocation>
    <subcellularLocation>
        <location evidence="1">Nematocyst</location>
    </subcellularLocation>
</comment>
<comment type="similarity">
    <text evidence="7">Belongs to the EGF domain peptide family.</text>
</comment>
<reference key="1">
    <citation type="journal article" date="2008" name="Peptides">
        <title>Novel peptide toxins from the sea anemone Stichodactyla haddoni.</title>
        <authorList>
            <person name="Honma T."/>
            <person name="Kawahata S."/>
            <person name="Ishida M."/>
            <person name="Nagai H."/>
            <person name="Nagashima Y."/>
            <person name="Shiomi K."/>
        </authorList>
    </citation>
    <scope>NUCLEOTIDE SEQUENCE [MRNA]</scope>
</reference>
<reference key="2">
    <citation type="journal article" date="2012" name="Toxicon">
        <title>Development of a rational nomenclature for naming peptide and protein toxins from sea anemones.</title>
        <authorList>
            <person name="Oliveira J.S."/>
            <person name="Fuentes-Silva D."/>
            <person name="King G.F."/>
        </authorList>
    </citation>
    <scope>NOMENCLATURE</scope>
</reference>
<organism>
    <name type="scientific">Stichodactyla haddoni</name>
    <name type="common">Saddle carpet anemone</name>
    <name type="synonym">Haddon's sea anemone</name>
    <dbReference type="NCBI Taxonomy" id="475174"/>
    <lineage>
        <taxon>Eukaryota</taxon>
        <taxon>Metazoa</taxon>
        <taxon>Cnidaria</taxon>
        <taxon>Anthozoa</taxon>
        <taxon>Hexacorallia</taxon>
        <taxon>Actiniaria</taxon>
        <taxon>Stichodactylidae</taxon>
        <taxon>Stichodactyla</taxon>
    </lineage>
</organism>
<name>SHTX5_STIHA</name>
<feature type="signal peptide" evidence="3">
    <location>
        <begin position="1"/>
        <end position="23"/>
    </location>
</feature>
<feature type="propeptide" id="PRO_0000344520" evidence="1">
    <location>
        <begin position="24"/>
        <end position="36"/>
    </location>
</feature>
<feature type="chain" id="PRO_0000344521" description="OMEGA-stichotoxin-Shd4a">
    <location>
        <begin position="39"/>
        <end position="86"/>
    </location>
</feature>
<feature type="domain" description="EGF-like" evidence="4">
    <location>
        <begin position="40"/>
        <end position="82"/>
    </location>
</feature>
<feature type="disulfide bond" evidence="4">
    <location>
        <begin position="44"/>
        <end position="59"/>
    </location>
</feature>
<feature type="disulfide bond" evidence="4">
    <location>
        <begin position="53"/>
        <end position="70"/>
    </location>
</feature>
<feature type="disulfide bond" evidence="4">
    <location>
        <begin position="72"/>
        <end position="81"/>
    </location>
</feature>
<protein>
    <recommendedName>
        <fullName evidence="6">OMEGA-stichotoxin-Shd4a</fullName>
        <shortName evidence="6">OMEGA-SHTX-Shd4a</shortName>
    </recommendedName>
    <alternativeName>
        <fullName evidence="5">EGF-like peptide SHTX V</fullName>
    </alternativeName>
    <alternativeName>
        <fullName>SHTX-5</fullName>
    </alternativeName>
</protein>
<keyword id="KW-0165">Cleavage on pair of basic residues</keyword>
<keyword id="KW-1015">Disulfide bond</keyword>
<keyword id="KW-0245">EGF-like domain</keyword>
<keyword id="KW-0166">Nematocyst</keyword>
<keyword id="KW-0964">Secreted</keyword>
<keyword id="KW-0732">Signal</keyword>
<keyword id="KW-0800">Toxin</keyword>
<dbReference type="EMBL" id="AB362571">
    <property type="protein sequence ID" value="BAG12826.1"/>
    <property type="molecule type" value="mRNA"/>
</dbReference>
<dbReference type="SMR" id="B1B5J0"/>
<dbReference type="GO" id="GO:0005576">
    <property type="term" value="C:extracellular region"/>
    <property type="evidence" value="ECO:0007669"/>
    <property type="project" value="UniProtKB-SubCell"/>
</dbReference>
<dbReference type="GO" id="GO:0042151">
    <property type="term" value="C:nematocyst"/>
    <property type="evidence" value="ECO:0007669"/>
    <property type="project" value="UniProtKB-SubCell"/>
</dbReference>
<dbReference type="GO" id="GO:0090729">
    <property type="term" value="F:toxin activity"/>
    <property type="evidence" value="ECO:0007669"/>
    <property type="project" value="UniProtKB-KW"/>
</dbReference>
<dbReference type="CDD" id="cd00054">
    <property type="entry name" value="EGF_CA"/>
    <property type="match status" value="1"/>
</dbReference>
<dbReference type="Gene3D" id="2.10.25.10">
    <property type="entry name" value="Laminin"/>
    <property type="match status" value="1"/>
</dbReference>
<dbReference type="InterPro" id="IPR000742">
    <property type="entry name" value="EGF-like_dom"/>
</dbReference>
<dbReference type="Pfam" id="PF00008">
    <property type="entry name" value="EGF"/>
    <property type="match status" value="1"/>
</dbReference>
<dbReference type="SUPFAM" id="SSF57196">
    <property type="entry name" value="EGF/Laminin"/>
    <property type="match status" value="1"/>
</dbReference>
<dbReference type="PROSITE" id="PS00022">
    <property type="entry name" value="EGF_1"/>
    <property type="match status" value="1"/>
</dbReference>
<dbReference type="PROSITE" id="PS50026">
    <property type="entry name" value="EGF_3"/>
    <property type="match status" value="1"/>
</dbReference>
<proteinExistence type="evidence at transcript level"/>
<accession>B1B5J0</accession>
<sequence>MASFRTLFACVVILCCVLWSSMARYGEDMEVETEMNKRDEGVRCTGQHASSFCLNGGTCRHIASLGEYYCICPGDYTGHRCDQKSG</sequence>
<evidence type="ECO:0000250" key="1"/>
<evidence type="ECO:0000250" key="2">
    <source>
        <dbReference type="UniProtKB" id="Q76CA1"/>
    </source>
</evidence>
<evidence type="ECO:0000255" key="3"/>
<evidence type="ECO:0000255" key="4">
    <source>
        <dbReference type="PROSITE-ProRule" id="PRU00076"/>
    </source>
</evidence>
<evidence type="ECO:0000303" key="5">
    <source>
    </source>
</evidence>
<evidence type="ECO:0000303" key="6">
    <source>
    </source>
</evidence>
<evidence type="ECO:0000305" key="7"/>